<name>RL22_BRUA2</name>
<evidence type="ECO:0000255" key="1">
    <source>
        <dbReference type="HAMAP-Rule" id="MF_01331"/>
    </source>
</evidence>
<evidence type="ECO:0000305" key="2"/>
<sequence length="129" mass="14143">MGKAKAPRQLKDNEAKAVARTLRVSPQKLNLVASMIRGKKVNAALADLTFSRKRIAGTVKKTLESAIANAENNHDLDVDALIVAEAYVGKSIVMKRFHVRDRGRASRIEKPFSHLTIVVREVAEKGKAA</sequence>
<reference key="1">
    <citation type="journal article" date="2005" name="Infect. Immun.">
        <title>Whole-genome analyses of speciation events in pathogenic Brucellae.</title>
        <authorList>
            <person name="Chain P.S."/>
            <person name="Comerci D.J."/>
            <person name="Tolmasky M.E."/>
            <person name="Larimer F.W."/>
            <person name="Malfatti S.A."/>
            <person name="Vergez L.M."/>
            <person name="Aguero F."/>
            <person name="Land M.L."/>
            <person name="Ugalde R.A."/>
            <person name="Garcia E."/>
        </authorList>
    </citation>
    <scope>NUCLEOTIDE SEQUENCE [LARGE SCALE GENOMIC DNA]</scope>
    <source>
        <strain>2308</strain>
    </source>
</reference>
<proteinExistence type="inferred from homology"/>
<accession>Q2YRA0</accession>
<keyword id="KW-1185">Reference proteome</keyword>
<keyword id="KW-0687">Ribonucleoprotein</keyword>
<keyword id="KW-0689">Ribosomal protein</keyword>
<keyword id="KW-0694">RNA-binding</keyword>
<keyword id="KW-0699">rRNA-binding</keyword>
<feature type="chain" id="PRO_0000243129" description="Large ribosomal subunit protein uL22">
    <location>
        <begin position="1"/>
        <end position="129"/>
    </location>
</feature>
<dbReference type="EMBL" id="AM040264">
    <property type="protein sequence ID" value="CAJ11206.1"/>
    <property type="molecule type" value="Genomic_DNA"/>
</dbReference>
<dbReference type="RefSeq" id="WP_002964357.1">
    <property type="nucleotide sequence ID" value="NZ_KN046823.1"/>
</dbReference>
<dbReference type="SMR" id="Q2YRA0"/>
<dbReference type="STRING" id="359391.BAB1_1250"/>
<dbReference type="GeneID" id="93016444"/>
<dbReference type="KEGG" id="bmf:BAB1_1250"/>
<dbReference type="PATRIC" id="fig|359391.11.peg.150"/>
<dbReference type="HOGENOM" id="CLU_083987_3_0_5"/>
<dbReference type="PhylomeDB" id="Q2YRA0"/>
<dbReference type="Proteomes" id="UP000002719">
    <property type="component" value="Chromosome I"/>
</dbReference>
<dbReference type="GO" id="GO:0022625">
    <property type="term" value="C:cytosolic large ribosomal subunit"/>
    <property type="evidence" value="ECO:0007669"/>
    <property type="project" value="TreeGrafter"/>
</dbReference>
<dbReference type="GO" id="GO:0019843">
    <property type="term" value="F:rRNA binding"/>
    <property type="evidence" value="ECO:0007669"/>
    <property type="project" value="UniProtKB-UniRule"/>
</dbReference>
<dbReference type="GO" id="GO:0003735">
    <property type="term" value="F:structural constituent of ribosome"/>
    <property type="evidence" value="ECO:0007669"/>
    <property type="project" value="InterPro"/>
</dbReference>
<dbReference type="GO" id="GO:0006412">
    <property type="term" value="P:translation"/>
    <property type="evidence" value="ECO:0007669"/>
    <property type="project" value="UniProtKB-UniRule"/>
</dbReference>
<dbReference type="CDD" id="cd00336">
    <property type="entry name" value="Ribosomal_L22"/>
    <property type="match status" value="1"/>
</dbReference>
<dbReference type="Gene3D" id="3.90.470.10">
    <property type="entry name" value="Ribosomal protein L22/L17"/>
    <property type="match status" value="1"/>
</dbReference>
<dbReference type="HAMAP" id="MF_01331_B">
    <property type="entry name" value="Ribosomal_uL22_B"/>
    <property type="match status" value="1"/>
</dbReference>
<dbReference type="InterPro" id="IPR001063">
    <property type="entry name" value="Ribosomal_uL22"/>
</dbReference>
<dbReference type="InterPro" id="IPR005727">
    <property type="entry name" value="Ribosomal_uL22_bac/chlpt-type"/>
</dbReference>
<dbReference type="InterPro" id="IPR047867">
    <property type="entry name" value="Ribosomal_uL22_bac/org-type"/>
</dbReference>
<dbReference type="InterPro" id="IPR036394">
    <property type="entry name" value="Ribosomal_uL22_sf"/>
</dbReference>
<dbReference type="NCBIfam" id="TIGR01044">
    <property type="entry name" value="rplV_bact"/>
    <property type="match status" value="1"/>
</dbReference>
<dbReference type="PANTHER" id="PTHR13501">
    <property type="entry name" value="CHLOROPLAST 50S RIBOSOMAL PROTEIN L22-RELATED"/>
    <property type="match status" value="1"/>
</dbReference>
<dbReference type="PANTHER" id="PTHR13501:SF8">
    <property type="entry name" value="LARGE RIBOSOMAL SUBUNIT PROTEIN UL22M"/>
    <property type="match status" value="1"/>
</dbReference>
<dbReference type="Pfam" id="PF00237">
    <property type="entry name" value="Ribosomal_L22"/>
    <property type="match status" value="1"/>
</dbReference>
<dbReference type="SUPFAM" id="SSF54843">
    <property type="entry name" value="Ribosomal protein L22"/>
    <property type="match status" value="1"/>
</dbReference>
<protein>
    <recommendedName>
        <fullName evidence="1">Large ribosomal subunit protein uL22</fullName>
    </recommendedName>
    <alternativeName>
        <fullName evidence="2">50S ribosomal protein L22</fullName>
    </alternativeName>
</protein>
<comment type="function">
    <text evidence="1">This protein binds specifically to 23S rRNA; its binding is stimulated by other ribosomal proteins, e.g. L4, L17, and L20. It is important during the early stages of 50S assembly. It makes multiple contacts with different domains of the 23S rRNA in the assembled 50S subunit and ribosome (By similarity).</text>
</comment>
<comment type="function">
    <text evidence="1">The globular domain of the protein is located near the polypeptide exit tunnel on the outside of the subunit, while an extended beta-hairpin is found that lines the wall of the exit tunnel in the center of the 70S ribosome.</text>
</comment>
<comment type="subunit">
    <text evidence="1">Part of the 50S ribosomal subunit.</text>
</comment>
<comment type="similarity">
    <text evidence="1">Belongs to the universal ribosomal protein uL22 family.</text>
</comment>
<gene>
    <name evidence="1" type="primary">rplV</name>
    <name type="ordered locus">BAB1_1250</name>
</gene>
<organism>
    <name type="scientific">Brucella abortus (strain 2308)</name>
    <dbReference type="NCBI Taxonomy" id="359391"/>
    <lineage>
        <taxon>Bacteria</taxon>
        <taxon>Pseudomonadati</taxon>
        <taxon>Pseudomonadota</taxon>
        <taxon>Alphaproteobacteria</taxon>
        <taxon>Hyphomicrobiales</taxon>
        <taxon>Brucellaceae</taxon>
        <taxon>Brucella/Ochrobactrum group</taxon>
        <taxon>Brucella</taxon>
    </lineage>
</organism>